<feature type="chain" id="PRO_1000074818" description="UPF0102 protein RHA1_ro06551">
    <location>
        <begin position="1"/>
        <end position="118"/>
    </location>
</feature>
<evidence type="ECO:0000255" key="1">
    <source>
        <dbReference type="HAMAP-Rule" id="MF_00048"/>
    </source>
</evidence>
<protein>
    <recommendedName>
        <fullName evidence="1">UPF0102 protein RHA1_ro06551</fullName>
    </recommendedName>
</protein>
<name>Y6551_RHOJR</name>
<reference key="1">
    <citation type="journal article" date="2006" name="Proc. Natl. Acad. Sci. U.S.A.">
        <title>The complete genome of Rhodococcus sp. RHA1 provides insights into a catabolic powerhouse.</title>
        <authorList>
            <person name="McLeod M.P."/>
            <person name="Warren R.L."/>
            <person name="Hsiao W.W.L."/>
            <person name="Araki N."/>
            <person name="Myhre M."/>
            <person name="Fernandes C."/>
            <person name="Miyazawa D."/>
            <person name="Wong W."/>
            <person name="Lillquist A.L."/>
            <person name="Wang D."/>
            <person name="Dosanjh M."/>
            <person name="Hara H."/>
            <person name="Petrescu A."/>
            <person name="Morin R.D."/>
            <person name="Yang G."/>
            <person name="Stott J.M."/>
            <person name="Schein J.E."/>
            <person name="Shin H."/>
            <person name="Smailus D."/>
            <person name="Siddiqui A.S."/>
            <person name="Marra M.A."/>
            <person name="Jones S.J.M."/>
            <person name="Holt R."/>
            <person name="Brinkman F.S.L."/>
            <person name="Miyauchi K."/>
            <person name="Fukuda M."/>
            <person name="Davies J.E."/>
            <person name="Mohn W.W."/>
            <person name="Eltis L.D."/>
        </authorList>
    </citation>
    <scope>NUCLEOTIDE SEQUENCE [LARGE SCALE GENOMIC DNA]</scope>
    <source>
        <strain>RHA1</strain>
    </source>
</reference>
<dbReference type="EMBL" id="CP000431">
    <property type="protein sequence ID" value="ABG98324.1"/>
    <property type="molecule type" value="Genomic_DNA"/>
</dbReference>
<dbReference type="RefSeq" id="WP_005259362.1">
    <property type="nucleotide sequence ID" value="NC_008268.1"/>
</dbReference>
<dbReference type="SMR" id="Q0S2B2"/>
<dbReference type="KEGG" id="rha:RHA1_ro06551"/>
<dbReference type="eggNOG" id="COG0792">
    <property type="taxonomic scope" value="Bacteria"/>
</dbReference>
<dbReference type="HOGENOM" id="CLU_115353_2_3_11"/>
<dbReference type="OrthoDB" id="9794876at2"/>
<dbReference type="Proteomes" id="UP000008710">
    <property type="component" value="Chromosome"/>
</dbReference>
<dbReference type="GO" id="GO:0003676">
    <property type="term" value="F:nucleic acid binding"/>
    <property type="evidence" value="ECO:0007669"/>
    <property type="project" value="InterPro"/>
</dbReference>
<dbReference type="CDD" id="cd20736">
    <property type="entry name" value="PoNe_Nuclease"/>
    <property type="match status" value="1"/>
</dbReference>
<dbReference type="Gene3D" id="3.40.1350.10">
    <property type="match status" value="1"/>
</dbReference>
<dbReference type="HAMAP" id="MF_00048">
    <property type="entry name" value="UPF0102"/>
    <property type="match status" value="1"/>
</dbReference>
<dbReference type="InterPro" id="IPR011335">
    <property type="entry name" value="Restrct_endonuc-II-like"/>
</dbReference>
<dbReference type="InterPro" id="IPR011856">
    <property type="entry name" value="tRNA_endonuc-like_dom_sf"/>
</dbReference>
<dbReference type="InterPro" id="IPR003509">
    <property type="entry name" value="UPF0102_YraN-like"/>
</dbReference>
<dbReference type="NCBIfam" id="NF009150">
    <property type="entry name" value="PRK12497.1-3"/>
    <property type="match status" value="1"/>
</dbReference>
<dbReference type="NCBIfam" id="NF009154">
    <property type="entry name" value="PRK12497.3-3"/>
    <property type="match status" value="1"/>
</dbReference>
<dbReference type="NCBIfam" id="TIGR00252">
    <property type="entry name" value="YraN family protein"/>
    <property type="match status" value="1"/>
</dbReference>
<dbReference type="PANTHER" id="PTHR34039">
    <property type="entry name" value="UPF0102 PROTEIN YRAN"/>
    <property type="match status" value="1"/>
</dbReference>
<dbReference type="PANTHER" id="PTHR34039:SF1">
    <property type="entry name" value="UPF0102 PROTEIN YRAN"/>
    <property type="match status" value="1"/>
</dbReference>
<dbReference type="Pfam" id="PF02021">
    <property type="entry name" value="UPF0102"/>
    <property type="match status" value="1"/>
</dbReference>
<dbReference type="SUPFAM" id="SSF52980">
    <property type="entry name" value="Restriction endonuclease-like"/>
    <property type="match status" value="1"/>
</dbReference>
<proteinExistence type="inferred from homology"/>
<comment type="similarity">
    <text evidence="1">Belongs to the UPF0102 family.</text>
</comment>
<gene>
    <name type="ordered locus">RHA1_ro06551</name>
</gene>
<accession>Q0S2B2</accession>
<sequence>MAHNLALGAHGEDLAARYLTEAGMEIVDRNWRSRYGEVDLIAAEGDWLVFVEVKTRRGLGYGSPAEAVTFSKQRRIRLLAVEWLRDSGRHWSRVRFDVVAIMIGHGPQPQIEHVRDAF</sequence>
<organism>
    <name type="scientific">Rhodococcus jostii (strain RHA1)</name>
    <dbReference type="NCBI Taxonomy" id="101510"/>
    <lineage>
        <taxon>Bacteria</taxon>
        <taxon>Bacillati</taxon>
        <taxon>Actinomycetota</taxon>
        <taxon>Actinomycetes</taxon>
        <taxon>Mycobacteriales</taxon>
        <taxon>Nocardiaceae</taxon>
        <taxon>Rhodococcus</taxon>
    </lineage>
</organism>